<name>YHD1_SCHPO</name>
<protein>
    <recommendedName>
        <fullName>Putative inorganic phosphate transporter C1683.01</fullName>
    </recommendedName>
</protein>
<proteinExistence type="inferred from homology"/>
<sequence>MKLNIFKSHGDSNTAEERPVPLEQVEAEDQQHENRFWLGLTAKEFRLMMLAGVGFFLDSYDLFIINLVTPIFEYLYWGGIEKGPNGKGHYPSGIRGLVNAASNIGNIFGQLMFGFMGDFFGRKFVYGKEMIIVIIATILLIAMPKSIHSPLSKMMWVFCWRWLLGVGIGGDYPMSAAITSERSKLNRRGTLISLIFAFQGFGTLAGAIVTIILLGCFEHPLNREGHYRKLEGVWRLQFGLALVPAIGVLIPRLMMEETQKFKNSQQLNSGDNRDPKTSLNFEDDELVKNPSVTKGHPEIHESSENYLSRSNTVENEPENIEKQFESVSAPANRSGFIQYFRQWHHFKHLLGTSVCWFLLDIAFYGVNLNQSVILKNIGFSSGTNEYRTLMKNAIGNLIIAVAGYVPGYWFNVFLVEILGRKWIQLQGFVITGLMFAILAGRWNEISTGGRFACFVIAQLFSNFGPNSTTFIYPAEVFPARVRGTAHGISAALGKCGAILASLLFNFLTSIIGYGNVMWIFCGCMWGGILFTLLLPETKGRDADEIDRVELFYGGDGKVECNSKWKSWYVNGIF</sequence>
<reference key="1">
    <citation type="journal article" date="2002" name="Nature">
        <title>The genome sequence of Schizosaccharomyces pombe.</title>
        <authorList>
            <person name="Wood V."/>
            <person name="Gwilliam R."/>
            <person name="Rajandream M.A."/>
            <person name="Lyne M.H."/>
            <person name="Lyne R."/>
            <person name="Stewart A."/>
            <person name="Sgouros J.G."/>
            <person name="Peat N."/>
            <person name="Hayles J."/>
            <person name="Baker S.G."/>
            <person name="Basham D."/>
            <person name="Bowman S."/>
            <person name="Brooks K."/>
            <person name="Brown D."/>
            <person name="Brown S."/>
            <person name="Chillingworth T."/>
            <person name="Churcher C.M."/>
            <person name="Collins M."/>
            <person name="Connor R."/>
            <person name="Cronin A."/>
            <person name="Davis P."/>
            <person name="Feltwell T."/>
            <person name="Fraser A."/>
            <person name="Gentles S."/>
            <person name="Goble A."/>
            <person name="Hamlin N."/>
            <person name="Harris D.E."/>
            <person name="Hidalgo J."/>
            <person name="Hodgson G."/>
            <person name="Holroyd S."/>
            <person name="Hornsby T."/>
            <person name="Howarth S."/>
            <person name="Huckle E.J."/>
            <person name="Hunt S."/>
            <person name="Jagels K."/>
            <person name="James K.D."/>
            <person name="Jones L."/>
            <person name="Jones M."/>
            <person name="Leather S."/>
            <person name="McDonald S."/>
            <person name="McLean J."/>
            <person name="Mooney P."/>
            <person name="Moule S."/>
            <person name="Mungall K.L."/>
            <person name="Murphy L.D."/>
            <person name="Niblett D."/>
            <person name="Odell C."/>
            <person name="Oliver K."/>
            <person name="O'Neil S."/>
            <person name="Pearson D."/>
            <person name="Quail M.A."/>
            <person name="Rabbinowitsch E."/>
            <person name="Rutherford K.M."/>
            <person name="Rutter S."/>
            <person name="Saunders D."/>
            <person name="Seeger K."/>
            <person name="Sharp S."/>
            <person name="Skelton J."/>
            <person name="Simmonds M.N."/>
            <person name="Squares R."/>
            <person name="Squares S."/>
            <person name="Stevens K."/>
            <person name="Taylor K."/>
            <person name="Taylor R.G."/>
            <person name="Tivey A."/>
            <person name="Walsh S.V."/>
            <person name="Warren T."/>
            <person name="Whitehead S."/>
            <person name="Woodward J.R."/>
            <person name="Volckaert G."/>
            <person name="Aert R."/>
            <person name="Robben J."/>
            <person name="Grymonprez B."/>
            <person name="Weltjens I."/>
            <person name="Vanstreels E."/>
            <person name="Rieger M."/>
            <person name="Schaefer M."/>
            <person name="Mueller-Auer S."/>
            <person name="Gabel C."/>
            <person name="Fuchs M."/>
            <person name="Duesterhoeft A."/>
            <person name="Fritzc C."/>
            <person name="Holzer E."/>
            <person name="Moestl D."/>
            <person name="Hilbert H."/>
            <person name="Borzym K."/>
            <person name="Langer I."/>
            <person name="Beck A."/>
            <person name="Lehrach H."/>
            <person name="Reinhardt R."/>
            <person name="Pohl T.M."/>
            <person name="Eger P."/>
            <person name="Zimmermann W."/>
            <person name="Wedler H."/>
            <person name="Wambutt R."/>
            <person name="Purnelle B."/>
            <person name="Goffeau A."/>
            <person name="Cadieu E."/>
            <person name="Dreano S."/>
            <person name="Gloux S."/>
            <person name="Lelaure V."/>
            <person name="Mottier S."/>
            <person name="Galibert F."/>
            <person name="Aves S.J."/>
            <person name="Xiang Z."/>
            <person name="Hunt C."/>
            <person name="Moore K."/>
            <person name="Hurst S.M."/>
            <person name="Lucas M."/>
            <person name="Rochet M."/>
            <person name="Gaillardin C."/>
            <person name="Tallada V.A."/>
            <person name="Garzon A."/>
            <person name="Thode G."/>
            <person name="Daga R.R."/>
            <person name="Cruzado L."/>
            <person name="Jimenez J."/>
            <person name="Sanchez M."/>
            <person name="del Rey F."/>
            <person name="Benito J."/>
            <person name="Dominguez A."/>
            <person name="Revuelta J.L."/>
            <person name="Moreno S."/>
            <person name="Armstrong J."/>
            <person name="Forsburg S.L."/>
            <person name="Cerutti L."/>
            <person name="Lowe T."/>
            <person name="McCombie W.R."/>
            <person name="Paulsen I."/>
            <person name="Potashkin J."/>
            <person name="Shpakovski G.V."/>
            <person name="Ussery D."/>
            <person name="Barrell B.G."/>
            <person name="Nurse P."/>
        </authorList>
    </citation>
    <scope>NUCLEOTIDE SEQUENCE [LARGE SCALE GENOMIC DNA]</scope>
    <source>
        <strain>972 / ATCC 24843</strain>
    </source>
</reference>
<reference key="2">
    <citation type="journal article" date="2000" name="Genes Cells">
        <title>Large-scale screening of intracellular protein localization in living fission yeast cells by the use of a GFP-fusion genomic DNA library.</title>
        <authorList>
            <person name="Ding D.-Q."/>
            <person name="Tomita Y."/>
            <person name="Yamamoto A."/>
            <person name="Chikashige Y."/>
            <person name="Haraguchi T."/>
            <person name="Hiraoka Y."/>
        </authorList>
    </citation>
    <scope>NUCLEOTIDE SEQUENCE [LARGE SCALE GENOMIC DNA] OF 67-274</scope>
    <scope>SUBCELLULAR LOCATION</scope>
    <source>
        <strain>ATCC 38364 / 968</strain>
    </source>
</reference>
<reference key="3">
    <citation type="journal article" date="2006" name="Nat. Biotechnol.">
        <title>ORFeome cloning and global analysis of protein localization in the fission yeast Schizosaccharomyces pombe.</title>
        <authorList>
            <person name="Matsuyama A."/>
            <person name="Arai R."/>
            <person name="Yashiroda Y."/>
            <person name="Shirai A."/>
            <person name="Kamata A."/>
            <person name="Sekido S."/>
            <person name="Kobayashi Y."/>
            <person name="Hashimoto A."/>
            <person name="Hamamoto M."/>
            <person name="Hiraoka Y."/>
            <person name="Horinouchi S."/>
            <person name="Yoshida M."/>
        </authorList>
    </citation>
    <scope>SUBCELLULAR LOCATION [LARGE SCALE ANALYSIS]</scope>
</reference>
<comment type="function">
    <text evidence="1">High-affinity transporter for external inorganic phosphate.</text>
</comment>
<comment type="subcellular location">
    <subcellularLocation>
        <location evidence="4 5">Endoplasmic reticulum membrane</location>
        <topology evidence="4 5">Multi-pass membrane protein</topology>
    </subcellularLocation>
</comment>
<comment type="similarity">
    <text evidence="6">Belongs to the major facilitator superfamily. Sugar transporter (TC 2.A.1.1) family.</text>
</comment>
<accession>Q9P6J9</accession>
<accession>Q9UTZ8</accession>
<gene>
    <name type="ORF">SPBC1683.01</name>
</gene>
<keyword id="KW-0256">Endoplasmic reticulum</keyword>
<keyword id="KW-0472">Membrane</keyword>
<keyword id="KW-0592">Phosphate transport</keyword>
<keyword id="KW-1185">Reference proteome</keyword>
<keyword id="KW-0812">Transmembrane</keyword>
<keyword id="KW-1133">Transmembrane helix</keyword>
<keyword id="KW-0813">Transport</keyword>
<feature type="chain" id="PRO_0000050480" description="Putative inorganic phosphate transporter C1683.01">
    <location>
        <begin position="1"/>
        <end position="573"/>
    </location>
</feature>
<feature type="transmembrane region" description="Helical" evidence="2">
    <location>
        <begin position="48"/>
        <end position="68"/>
    </location>
</feature>
<feature type="transmembrane region" description="Helical" evidence="2">
    <location>
        <begin position="100"/>
        <end position="120"/>
    </location>
</feature>
<feature type="transmembrane region" description="Helical" evidence="2">
    <location>
        <begin position="124"/>
        <end position="144"/>
    </location>
</feature>
<feature type="transmembrane region" description="Helical" evidence="2">
    <location>
        <begin position="154"/>
        <end position="174"/>
    </location>
</feature>
<feature type="transmembrane region" description="Helical" evidence="2">
    <location>
        <begin position="194"/>
        <end position="214"/>
    </location>
</feature>
<feature type="transmembrane region" description="Helical" evidence="2">
    <location>
        <begin position="230"/>
        <end position="250"/>
    </location>
</feature>
<feature type="transmembrane region" description="Helical" evidence="2">
    <location>
        <begin position="348"/>
        <end position="368"/>
    </location>
</feature>
<feature type="transmembrane region" description="Helical" evidence="2">
    <location>
        <begin position="397"/>
        <end position="417"/>
    </location>
</feature>
<feature type="transmembrane region" description="Helical" evidence="2">
    <location>
        <begin position="422"/>
        <end position="442"/>
    </location>
</feature>
<feature type="transmembrane region" description="Helical" evidence="2">
    <location>
        <begin position="451"/>
        <end position="471"/>
    </location>
</feature>
<feature type="transmembrane region" description="Helical" evidence="2">
    <location>
        <begin position="487"/>
        <end position="507"/>
    </location>
</feature>
<feature type="transmembrane region" description="Helical" evidence="2">
    <location>
        <begin position="510"/>
        <end position="530"/>
    </location>
</feature>
<feature type="region of interest" description="Disordered" evidence="3">
    <location>
        <begin position="261"/>
        <end position="280"/>
    </location>
</feature>
<feature type="region of interest" description="Disordered" evidence="3">
    <location>
        <begin position="290"/>
        <end position="312"/>
    </location>
</feature>
<feature type="compositionally biased region" description="Polar residues" evidence="3">
    <location>
        <begin position="261"/>
        <end position="270"/>
    </location>
</feature>
<feature type="sequence conflict" description="In Ref. 2; BAA87209." evidence="6" ref="2">
    <original>V</original>
    <variation>G</variation>
    <location>
        <position position="68"/>
    </location>
</feature>
<dbReference type="EMBL" id="CU329671">
    <property type="protein sequence ID" value="CAB91163.1"/>
    <property type="molecule type" value="Genomic_DNA"/>
</dbReference>
<dbReference type="EMBL" id="AB027905">
    <property type="protein sequence ID" value="BAA87209.1"/>
    <property type="molecule type" value="Genomic_DNA"/>
</dbReference>
<dbReference type="SMR" id="Q9P6J9"/>
<dbReference type="BioGRID" id="276623">
    <property type="interactions" value="1"/>
</dbReference>
<dbReference type="FunCoup" id="Q9P6J9">
    <property type="interactions" value="550"/>
</dbReference>
<dbReference type="STRING" id="284812.Q9P6J9"/>
<dbReference type="iPTMnet" id="Q9P6J9"/>
<dbReference type="PaxDb" id="4896-SPBC1683.01.1"/>
<dbReference type="EnsemblFungi" id="SPBC1683.01.1">
    <property type="protein sequence ID" value="SPBC1683.01.1:pep"/>
    <property type="gene ID" value="SPBC1683.01"/>
</dbReference>
<dbReference type="KEGG" id="spo:2540085"/>
<dbReference type="PomBase" id="SPBC1683.01"/>
<dbReference type="VEuPathDB" id="FungiDB:SPBC1683.01"/>
<dbReference type="eggNOG" id="KOG0252">
    <property type="taxonomic scope" value="Eukaryota"/>
</dbReference>
<dbReference type="HOGENOM" id="CLU_001265_46_14_1"/>
<dbReference type="InParanoid" id="Q9P6J9"/>
<dbReference type="OMA" id="FWIARAQ"/>
<dbReference type="PhylomeDB" id="Q9P6J9"/>
<dbReference type="PRO" id="PR:Q9P6J9"/>
<dbReference type="Proteomes" id="UP000002485">
    <property type="component" value="Chromosome II"/>
</dbReference>
<dbReference type="GO" id="GO:0005789">
    <property type="term" value="C:endoplasmic reticulum membrane"/>
    <property type="evidence" value="ECO:0007669"/>
    <property type="project" value="UniProtKB-SubCell"/>
</dbReference>
<dbReference type="GO" id="GO:0005886">
    <property type="term" value="C:plasma membrane"/>
    <property type="evidence" value="ECO:0000266"/>
    <property type="project" value="PomBase"/>
</dbReference>
<dbReference type="GO" id="GO:0005315">
    <property type="term" value="F:phosphate transmembrane transporter activity"/>
    <property type="evidence" value="ECO:0000266"/>
    <property type="project" value="PomBase"/>
</dbReference>
<dbReference type="GO" id="GO:0006820">
    <property type="term" value="P:monoatomic anion transport"/>
    <property type="evidence" value="ECO:0000303"/>
    <property type="project" value="PomBase"/>
</dbReference>
<dbReference type="GO" id="GO:0035435">
    <property type="term" value="P:phosphate ion transmembrane transport"/>
    <property type="evidence" value="ECO:0000266"/>
    <property type="project" value="PomBase"/>
</dbReference>
<dbReference type="CDD" id="cd17364">
    <property type="entry name" value="MFS_PhT"/>
    <property type="match status" value="1"/>
</dbReference>
<dbReference type="FunFam" id="1.20.1250.20:FF:000421">
    <property type="entry name" value="Inorganic phosphate transporter"/>
    <property type="match status" value="1"/>
</dbReference>
<dbReference type="FunFam" id="1.20.1250.20:FF:000492">
    <property type="entry name" value="Probable inorganic phosphate transporter 1-5"/>
    <property type="match status" value="1"/>
</dbReference>
<dbReference type="Gene3D" id="1.20.1250.20">
    <property type="entry name" value="MFS general substrate transporter like domains"/>
    <property type="match status" value="2"/>
</dbReference>
<dbReference type="InterPro" id="IPR020846">
    <property type="entry name" value="MFS_dom"/>
</dbReference>
<dbReference type="InterPro" id="IPR005828">
    <property type="entry name" value="MFS_sugar_transport-like"/>
</dbReference>
<dbReference type="InterPro" id="IPR036259">
    <property type="entry name" value="MFS_trans_sf"/>
</dbReference>
<dbReference type="InterPro" id="IPR004738">
    <property type="entry name" value="Phos_permease"/>
</dbReference>
<dbReference type="InterPro" id="IPR005829">
    <property type="entry name" value="Sugar_transporter_CS"/>
</dbReference>
<dbReference type="NCBIfam" id="TIGR00887">
    <property type="entry name" value="2A0109"/>
    <property type="match status" value="1"/>
</dbReference>
<dbReference type="PANTHER" id="PTHR24064">
    <property type="entry name" value="SOLUTE CARRIER FAMILY 22 MEMBER"/>
    <property type="match status" value="1"/>
</dbReference>
<dbReference type="Pfam" id="PF00083">
    <property type="entry name" value="Sugar_tr"/>
    <property type="match status" value="2"/>
</dbReference>
<dbReference type="SUPFAM" id="SSF103473">
    <property type="entry name" value="MFS general substrate transporter"/>
    <property type="match status" value="1"/>
</dbReference>
<dbReference type="PROSITE" id="PS50850">
    <property type="entry name" value="MFS"/>
    <property type="match status" value="1"/>
</dbReference>
<dbReference type="PROSITE" id="PS00217">
    <property type="entry name" value="SUGAR_TRANSPORT_2"/>
    <property type="match status" value="1"/>
</dbReference>
<organism>
    <name type="scientific">Schizosaccharomyces pombe (strain 972 / ATCC 24843)</name>
    <name type="common">Fission yeast</name>
    <dbReference type="NCBI Taxonomy" id="284812"/>
    <lineage>
        <taxon>Eukaryota</taxon>
        <taxon>Fungi</taxon>
        <taxon>Dikarya</taxon>
        <taxon>Ascomycota</taxon>
        <taxon>Taphrinomycotina</taxon>
        <taxon>Schizosaccharomycetes</taxon>
        <taxon>Schizosaccharomycetales</taxon>
        <taxon>Schizosaccharomycetaceae</taxon>
        <taxon>Schizosaccharomyces</taxon>
    </lineage>
</organism>
<evidence type="ECO:0000250" key="1"/>
<evidence type="ECO:0000255" key="2"/>
<evidence type="ECO:0000256" key="3">
    <source>
        <dbReference type="SAM" id="MobiDB-lite"/>
    </source>
</evidence>
<evidence type="ECO:0000269" key="4">
    <source>
    </source>
</evidence>
<evidence type="ECO:0000269" key="5">
    <source>
    </source>
</evidence>
<evidence type="ECO:0000305" key="6"/>